<dbReference type="EC" id="7.-.-.-" evidence="1"/>
<dbReference type="EMBL" id="CP000446">
    <property type="protein sequence ID" value="ABI39140.1"/>
    <property type="molecule type" value="Genomic_DNA"/>
</dbReference>
<dbReference type="RefSeq" id="WP_011622830.1">
    <property type="nucleotide sequence ID" value="NC_008321.1"/>
</dbReference>
<dbReference type="SMR" id="Q0HIH7"/>
<dbReference type="KEGG" id="she:Shewmr4_2067"/>
<dbReference type="HOGENOM" id="CLU_042020_0_0_6"/>
<dbReference type="GO" id="GO:0005886">
    <property type="term" value="C:plasma membrane"/>
    <property type="evidence" value="ECO:0007669"/>
    <property type="project" value="UniProtKB-SubCell"/>
</dbReference>
<dbReference type="GO" id="GO:0022900">
    <property type="term" value="P:electron transport chain"/>
    <property type="evidence" value="ECO:0007669"/>
    <property type="project" value="UniProtKB-UniRule"/>
</dbReference>
<dbReference type="GO" id="GO:0055085">
    <property type="term" value="P:transmembrane transport"/>
    <property type="evidence" value="ECO:0007669"/>
    <property type="project" value="InterPro"/>
</dbReference>
<dbReference type="HAMAP" id="MF_00462">
    <property type="entry name" value="RsxD_RnfD"/>
    <property type="match status" value="1"/>
</dbReference>
<dbReference type="InterPro" id="IPR004338">
    <property type="entry name" value="NqrB/RnfD"/>
</dbReference>
<dbReference type="InterPro" id="IPR011303">
    <property type="entry name" value="RnfD_bac"/>
</dbReference>
<dbReference type="NCBIfam" id="NF002011">
    <property type="entry name" value="PRK00816.1"/>
    <property type="match status" value="1"/>
</dbReference>
<dbReference type="NCBIfam" id="TIGR01946">
    <property type="entry name" value="rnfD"/>
    <property type="match status" value="1"/>
</dbReference>
<dbReference type="PANTHER" id="PTHR30578">
    <property type="entry name" value="ELECTRON TRANSPORT COMPLEX PROTEIN RNFD"/>
    <property type="match status" value="1"/>
</dbReference>
<dbReference type="PANTHER" id="PTHR30578:SF0">
    <property type="entry name" value="ION-TRANSLOCATING OXIDOREDUCTASE COMPLEX SUBUNIT D"/>
    <property type="match status" value="1"/>
</dbReference>
<dbReference type="Pfam" id="PF03116">
    <property type="entry name" value="NQR2_RnfD_RnfE"/>
    <property type="match status" value="1"/>
</dbReference>
<feature type="chain" id="PRO_1000013631" description="Ion-translocating oxidoreductase complex subunit D">
    <location>
        <begin position="1"/>
        <end position="349"/>
    </location>
</feature>
<feature type="transmembrane region" description="Helical" evidence="1">
    <location>
        <begin position="36"/>
        <end position="56"/>
    </location>
</feature>
<feature type="transmembrane region" description="Helical" evidence="1">
    <location>
        <begin position="77"/>
        <end position="99"/>
    </location>
</feature>
<feature type="transmembrane region" description="Helical" evidence="1">
    <location>
        <begin position="124"/>
        <end position="144"/>
    </location>
</feature>
<feature type="transmembrane region" description="Helical" evidence="1">
    <location>
        <begin position="212"/>
        <end position="232"/>
    </location>
</feature>
<feature type="transmembrane region" description="Helical" evidence="1">
    <location>
        <begin position="239"/>
        <end position="259"/>
    </location>
</feature>
<feature type="transmembrane region" description="Helical" evidence="1">
    <location>
        <begin position="265"/>
        <end position="285"/>
    </location>
</feature>
<feature type="transmembrane region" description="Helical" evidence="1">
    <location>
        <begin position="291"/>
        <end position="311"/>
    </location>
</feature>
<feature type="transmembrane region" description="Helical" evidence="1">
    <location>
        <begin position="315"/>
        <end position="335"/>
    </location>
</feature>
<feature type="modified residue" description="FMN phosphoryl threonine" evidence="1">
    <location>
        <position position="185"/>
    </location>
</feature>
<comment type="function">
    <text evidence="1">Part of a membrane-bound complex that couples electron transfer with translocation of ions across the membrane.</text>
</comment>
<comment type="cofactor">
    <cofactor evidence="1">
        <name>FMN</name>
        <dbReference type="ChEBI" id="CHEBI:58210"/>
    </cofactor>
</comment>
<comment type="subunit">
    <text evidence="1">The complex is composed of six subunits: RnfA, RnfB, RnfC, RnfD, RnfE and RnfG.</text>
</comment>
<comment type="subcellular location">
    <subcellularLocation>
        <location evidence="1">Cell inner membrane</location>
        <topology evidence="1">Multi-pass membrane protein</topology>
    </subcellularLocation>
</comment>
<comment type="similarity">
    <text evidence="1">Belongs to the NqrB/RnfD family.</text>
</comment>
<keyword id="KW-0997">Cell inner membrane</keyword>
<keyword id="KW-1003">Cell membrane</keyword>
<keyword id="KW-0249">Electron transport</keyword>
<keyword id="KW-0285">Flavoprotein</keyword>
<keyword id="KW-0288">FMN</keyword>
<keyword id="KW-0472">Membrane</keyword>
<keyword id="KW-0597">Phosphoprotein</keyword>
<keyword id="KW-1278">Translocase</keyword>
<keyword id="KW-0812">Transmembrane</keyword>
<keyword id="KW-1133">Transmembrane helix</keyword>
<keyword id="KW-0813">Transport</keyword>
<protein>
    <recommendedName>
        <fullName evidence="1">Ion-translocating oxidoreductase complex subunit D</fullName>
        <ecNumber evidence="1">7.-.-.-</ecNumber>
    </recommendedName>
    <alternativeName>
        <fullName evidence="1">Rnf electron transport complex subunit D</fullName>
    </alternativeName>
</protein>
<accession>Q0HIH7</accession>
<proteinExistence type="inferred from homology"/>
<organism>
    <name type="scientific">Shewanella sp. (strain MR-4)</name>
    <dbReference type="NCBI Taxonomy" id="60480"/>
    <lineage>
        <taxon>Bacteria</taxon>
        <taxon>Pseudomonadati</taxon>
        <taxon>Pseudomonadota</taxon>
        <taxon>Gammaproteobacteria</taxon>
        <taxon>Alteromonadales</taxon>
        <taxon>Shewanellaceae</taxon>
        <taxon>Shewanella</taxon>
    </lineage>
</organism>
<reference key="1">
    <citation type="submission" date="2006-08" db="EMBL/GenBank/DDBJ databases">
        <title>Complete sequence of Shewanella sp. MR-4.</title>
        <authorList>
            <consortium name="US DOE Joint Genome Institute"/>
            <person name="Copeland A."/>
            <person name="Lucas S."/>
            <person name="Lapidus A."/>
            <person name="Barry K."/>
            <person name="Detter J.C."/>
            <person name="Glavina del Rio T."/>
            <person name="Hammon N."/>
            <person name="Israni S."/>
            <person name="Dalin E."/>
            <person name="Tice H."/>
            <person name="Pitluck S."/>
            <person name="Kiss H."/>
            <person name="Brettin T."/>
            <person name="Bruce D."/>
            <person name="Han C."/>
            <person name="Tapia R."/>
            <person name="Gilna P."/>
            <person name="Schmutz J."/>
            <person name="Larimer F."/>
            <person name="Land M."/>
            <person name="Hauser L."/>
            <person name="Kyrpides N."/>
            <person name="Mikhailova N."/>
            <person name="Nealson K."/>
            <person name="Konstantinidis K."/>
            <person name="Klappenbach J."/>
            <person name="Tiedje J."/>
            <person name="Richardson P."/>
        </authorList>
    </citation>
    <scope>NUCLEOTIDE SEQUENCE [LARGE SCALE GENOMIC DNA]</scope>
    <source>
        <strain>MR-4</strain>
    </source>
</reference>
<gene>
    <name evidence="1" type="primary">rnfD</name>
    <name type="ordered locus">Shewmr4_2067</name>
</gene>
<sequence length="349" mass="37242">MAFKIASSPHVTRNLHTSTVMQRVILCLLPGLVVQCAFFGWGTLIQVLLAIIVALSCEAAVMKLRNRSIKASLSDNSAMLTAILIGVAIPPLAPWWMIVMGTVFAIVIVKHLYGGLGHNLFNPAMAAYVLLLVSFPVQMTSWIAPSTVALNTPSVIDSLQLIFNVGAHGGMEQFRLGIDGISMATPLDTLKTDLSLGLTTTESMAKSIFDGGTGVGWFWVNLAYLAGGLVLLKLKAIRWHISTGVLAGLFVASSIGFLLSPDTQASPLFHLFSGATMLAAFFIATDPVTAATSPRGRLIFGALIGVLVYVIRTQGGYPDAFAFAVLLANLCAPFIDYYVRPRTYGHSAP</sequence>
<name>RNFD_SHESM</name>
<evidence type="ECO:0000255" key="1">
    <source>
        <dbReference type="HAMAP-Rule" id="MF_00462"/>
    </source>
</evidence>